<sequence>MRWLTPFGMLFISGTYYGLIFFGLIMEVIHNALISLVLAFFVVFAWDLVLSLIYGLRFVKEGDYIALDWDGQFPDCYGLFASTCLSAVIWTYTDSLLLGLIVPVIIVFLGKQLMRGLYEKIKS</sequence>
<name>Y342_METJA</name>
<keyword id="KW-1185">Reference proteome</keyword>
<gene>
    <name type="ordered locus">MJ0342</name>
</gene>
<feature type="chain" id="PRO_0000106812" description="Uncharacterized protein MJ0342">
    <location>
        <begin position="1"/>
        <end position="123"/>
    </location>
</feature>
<reference key="1">
    <citation type="journal article" date="1996" name="Science">
        <title>Complete genome sequence of the methanogenic archaeon, Methanococcus jannaschii.</title>
        <authorList>
            <person name="Bult C.J."/>
            <person name="White O."/>
            <person name="Olsen G.J."/>
            <person name="Zhou L."/>
            <person name="Fleischmann R.D."/>
            <person name="Sutton G.G."/>
            <person name="Blake J.A."/>
            <person name="FitzGerald L.M."/>
            <person name="Clayton R.A."/>
            <person name="Gocayne J.D."/>
            <person name="Kerlavage A.R."/>
            <person name="Dougherty B.A."/>
            <person name="Tomb J.-F."/>
            <person name="Adams M.D."/>
            <person name="Reich C.I."/>
            <person name="Overbeek R."/>
            <person name="Kirkness E.F."/>
            <person name="Weinstock K.G."/>
            <person name="Merrick J.M."/>
            <person name="Glodek A."/>
            <person name="Scott J.L."/>
            <person name="Geoghagen N.S.M."/>
            <person name="Weidman J.F."/>
            <person name="Fuhrmann J.L."/>
            <person name="Nguyen D."/>
            <person name="Utterback T.R."/>
            <person name="Kelley J.M."/>
            <person name="Peterson J.D."/>
            <person name="Sadow P.W."/>
            <person name="Hanna M.C."/>
            <person name="Cotton M.D."/>
            <person name="Roberts K.M."/>
            <person name="Hurst M.A."/>
            <person name="Kaine B.P."/>
            <person name="Borodovsky M."/>
            <person name="Klenk H.-P."/>
            <person name="Fraser C.M."/>
            <person name="Smith H.O."/>
            <person name="Woese C.R."/>
            <person name="Venter J.C."/>
        </authorList>
    </citation>
    <scope>NUCLEOTIDE SEQUENCE [LARGE SCALE GENOMIC DNA]</scope>
    <source>
        <strain>ATCC 43067 / DSM 2661 / JAL-1 / JCM 10045 / NBRC 100440</strain>
    </source>
</reference>
<organism>
    <name type="scientific">Methanocaldococcus jannaschii (strain ATCC 43067 / DSM 2661 / JAL-1 / JCM 10045 / NBRC 100440)</name>
    <name type="common">Methanococcus jannaschii</name>
    <dbReference type="NCBI Taxonomy" id="243232"/>
    <lineage>
        <taxon>Archaea</taxon>
        <taxon>Methanobacteriati</taxon>
        <taxon>Methanobacteriota</taxon>
        <taxon>Methanomada group</taxon>
        <taxon>Methanococci</taxon>
        <taxon>Methanococcales</taxon>
        <taxon>Methanocaldococcaceae</taxon>
        <taxon>Methanocaldococcus</taxon>
    </lineage>
</organism>
<accession>Q57788</accession>
<protein>
    <recommendedName>
        <fullName>Uncharacterized protein MJ0342</fullName>
    </recommendedName>
</protein>
<proteinExistence type="predicted"/>
<dbReference type="EMBL" id="L77117">
    <property type="protein sequence ID" value="AAB98332.1"/>
    <property type="molecule type" value="Genomic_DNA"/>
</dbReference>
<dbReference type="PIR" id="F64342">
    <property type="entry name" value="F64342"/>
</dbReference>
<dbReference type="RefSeq" id="WP_010869840.1">
    <property type="nucleotide sequence ID" value="NC_000909.1"/>
</dbReference>
<dbReference type="SMR" id="Q57788"/>
<dbReference type="STRING" id="243232.MJ_0342"/>
<dbReference type="PaxDb" id="243232-MJ_0342"/>
<dbReference type="EnsemblBacteria" id="AAB98332">
    <property type="protein sequence ID" value="AAB98332"/>
    <property type="gene ID" value="MJ_0342"/>
</dbReference>
<dbReference type="GeneID" id="1451198"/>
<dbReference type="KEGG" id="mja:MJ_0342"/>
<dbReference type="eggNOG" id="arCOG09647">
    <property type="taxonomic scope" value="Archaea"/>
</dbReference>
<dbReference type="HOGENOM" id="CLU_2010098_0_0_2"/>
<dbReference type="InParanoid" id="Q57788"/>
<dbReference type="OrthoDB" id="376121at2157"/>
<dbReference type="Proteomes" id="UP000000805">
    <property type="component" value="Chromosome"/>
</dbReference>